<accession>Q0W938</accession>
<keyword id="KW-1185">Reference proteome</keyword>
<keyword id="KW-0687">Ribonucleoprotein</keyword>
<keyword id="KW-0689">Ribosomal protein</keyword>
<reference key="1">
    <citation type="journal article" date="2006" name="Science">
        <title>Genome of rice cluster I archaea -- the key methane producers in the rice rhizosphere.</title>
        <authorList>
            <person name="Erkel C."/>
            <person name="Kube M."/>
            <person name="Reinhardt R."/>
            <person name="Liesack W."/>
        </authorList>
    </citation>
    <scope>NUCLEOTIDE SEQUENCE [LARGE SCALE GENOMIC DNA]</scope>
    <source>
        <strain>DSM 22066 / NBRC 105507 / MRE50</strain>
    </source>
</reference>
<evidence type="ECO:0000255" key="1">
    <source>
        <dbReference type="HAMAP-Rule" id="MF_01343"/>
    </source>
</evidence>
<evidence type="ECO:0000256" key="2">
    <source>
        <dbReference type="SAM" id="MobiDB-lite"/>
    </source>
</evidence>
<evidence type="ECO:0000305" key="3"/>
<comment type="subunit">
    <text evidence="1">Part of the 30S ribosomal subunit.</text>
</comment>
<comment type="similarity">
    <text evidence="1">Belongs to the universal ribosomal protein uS15 family.</text>
</comment>
<dbReference type="EMBL" id="AM114193">
    <property type="protein sequence ID" value="CAJ35088.1"/>
    <property type="molecule type" value="Genomic_DNA"/>
</dbReference>
<dbReference type="RefSeq" id="WP_012037397.1">
    <property type="nucleotide sequence ID" value="NC_009464.1"/>
</dbReference>
<dbReference type="SMR" id="Q0W938"/>
<dbReference type="STRING" id="351160.LRC56"/>
<dbReference type="GeneID" id="5145478"/>
<dbReference type="KEGG" id="rci:LRC56"/>
<dbReference type="eggNOG" id="arCOG04185">
    <property type="taxonomic scope" value="Archaea"/>
</dbReference>
<dbReference type="OrthoDB" id="6533at2157"/>
<dbReference type="Proteomes" id="UP000000663">
    <property type="component" value="Chromosome"/>
</dbReference>
<dbReference type="GO" id="GO:0022627">
    <property type="term" value="C:cytosolic small ribosomal subunit"/>
    <property type="evidence" value="ECO:0007669"/>
    <property type="project" value="TreeGrafter"/>
</dbReference>
<dbReference type="GO" id="GO:0070181">
    <property type="term" value="F:small ribosomal subunit rRNA binding"/>
    <property type="evidence" value="ECO:0007669"/>
    <property type="project" value="TreeGrafter"/>
</dbReference>
<dbReference type="GO" id="GO:0003735">
    <property type="term" value="F:structural constituent of ribosome"/>
    <property type="evidence" value="ECO:0007669"/>
    <property type="project" value="InterPro"/>
</dbReference>
<dbReference type="GO" id="GO:0006412">
    <property type="term" value="P:translation"/>
    <property type="evidence" value="ECO:0007669"/>
    <property type="project" value="UniProtKB-UniRule"/>
</dbReference>
<dbReference type="CDD" id="cd00353">
    <property type="entry name" value="Ribosomal_S15p_S13e"/>
    <property type="match status" value="1"/>
</dbReference>
<dbReference type="FunFam" id="1.10.287.10:FF:000003">
    <property type="entry name" value="40S ribosomal protein S13"/>
    <property type="match status" value="1"/>
</dbReference>
<dbReference type="Gene3D" id="4.10.860.130">
    <property type="match status" value="1"/>
</dbReference>
<dbReference type="Gene3D" id="1.10.287.10">
    <property type="entry name" value="S15/NS1, RNA-binding"/>
    <property type="match status" value="1"/>
</dbReference>
<dbReference type="HAMAP" id="MF_01343_A">
    <property type="entry name" value="Ribosomal_uS15_A"/>
    <property type="match status" value="1"/>
</dbReference>
<dbReference type="InterPro" id="IPR000589">
    <property type="entry name" value="Ribosomal_uS15"/>
</dbReference>
<dbReference type="InterPro" id="IPR023029">
    <property type="entry name" value="Ribosomal_uS15_arc_euk"/>
</dbReference>
<dbReference type="InterPro" id="IPR012606">
    <property type="entry name" value="Ribosomal_uS15_N"/>
</dbReference>
<dbReference type="InterPro" id="IPR009068">
    <property type="entry name" value="uS15_NS1_RNA-bd_sf"/>
</dbReference>
<dbReference type="NCBIfam" id="NF006331">
    <property type="entry name" value="PRK08561.1"/>
    <property type="match status" value="1"/>
</dbReference>
<dbReference type="PANTHER" id="PTHR11885">
    <property type="entry name" value="RIBOSOMAL PROTEIN S15P/S13E"/>
    <property type="match status" value="1"/>
</dbReference>
<dbReference type="PANTHER" id="PTHR11885:SF6">
    <property type="entry name" value="SMALL RIBOSOMAL SUBUNIT PROTEIN US15"/>
    <property type="match status" value="1"/>
</dbReference>
<dbReference type="Pfam" id="PF08069">
    <property type="entry name" value="Ribosomal_S13_N"/>
    <property type="match status" value="1"/>
</dbReference>
<dbReference type="Pfam" id="PF00312">
    <property type="entry name" value="Ribosomal_S15"/>
    <property type="match status" value="1"/>
</dbReference>
<dbReference type="SMART" id="SM01386">
    <property type="entry name" value="Ribosomal_S13_N"/>
    <property type="match status" value="1"/>
</dbReference>
<dbReference type="SMART" id="SM01387">
    <property type="entry name" value="Ribosomal_S15"/>
    <property type="match status" value="1"/>
</dbReference>
<dbReference type="SUPFAM" id="SSF47060">
    <property type="entry name" value="S15/NS1 RNA-binding domain"/>
    <property type="match status" value="1"/>
</dbReference>
<dbReference type="PROSITE" id="PS00362">
    <property type="entry name" value="RIBOSOMAL_S15"/>
    <property type="match status" value="1"/>
</dbReference>
<organism>
    <name type="scientific">Methanocella arvoryzae (strain DSM 22066 / NBRC 105507 / MRE50)</name>
    <dbReference type="NCBI Taxonomy" id="351160"/>
    <lineage>
        <taxon>Archaea</taxon>
        <taxon>Methanobacteriati</taxon>
        <taxon>Methanobacteriota</taxon>
        <taxon>Stenosarchaea group</taxon>
        <taxon>Methanomicrobia</taxon>
        <taxon>Methanocellales</taxon>
        <taxon>Methanocellaceae</taxon>
        <taxon>Methanocella</taxon>
    </lineage>
</organism>
<name>RS15_METAR</name>
<protein>
    <recommendedName>
        <fullName evidence="1">Small ribosomal subunit protein uS15</fullName>
    </recommendedName>
    <alternativeName>
        <fullName evidence="3">30S ribosomal protein S15</fullName>
    </alternativeName>
</protein>
<feature type="chain" id="PRO_1000054892" description="Small ribosomal subunit protein uS15">
    <location>
        <begin position="1"/>
        <end position="152"/>
    </location>
</feature>
<feature type="region of interest" description="Disordered" evidence="2">
    <location>
        <begin position="1"/>
        <end position="21"/>
    </location>
</feature>
<feature type="compositionally biased region" description="Basic residues" evidence="2">
    <location>
        <begin position="1"/>
        <end position="19"/>
    </location>
</feature>
<sequence length="152" mass="17365">MAKMHTRRKGRSRSTRPVRKTPPAWFTMSKEEVEKLVVKTYGQNATTSQVGIILRDKYGVPDITQVTGKKVTAILKENGTGPKLPEDLVNLIKKAIRLHKHLDENHKDLHNKRALQLTESKVRRLVKYYHATGVLPMDWVYSPATAEILISR</sequence>
<gene>
    <name evidence="1" type="primary">rps15</name>
    <name type="ordered locus">UNCMA_30820</name>
    <name type="ORF">LRC56</name>
</gene>
<proteinExistence type="inferred from homology"/>